<organism>
    <name type="scientific">Haemophilus influenzae (strain 86-028NP)</name>
    <dbReference type="NCBI Taxonomy" id="281310"/>
    <lineage>
        <taxon>Bacteria</taxon>
        <taxon>Pseudomonadati</taxon>
        <taxon>Pseudomonadota</taxon>
        <taxon>Gammaproteobacteria</taxon>
        <taxon>Pasteurellales</taxon>
        <taxon>Pasteurellaceae</taxon>
        <taxon>Haemophilus</taxon>
    </lineage>
</organism>
<comment type="function">
    <text evidence="1">Required for rescue of stalled ribosomes mediated by trans-translation. Binds to transfer-messenger RNA (tmRNA), required for stable association of tmRNA with ribosomes. tmRNA and SmpB together mimic tRNA shape, replacing the anticodon stem-loop with SmpB. tmRNA is encoded by the ssrA gene; the 2 termini fold to resemble tRNA(Ala) and it encodes a 'tag peptide', a short internal open reading frame. During trans-translation Ala-aminoacylated tmRNA acts like a tRNA, entering the A-site of stalled ribosomes, displacing the stalled mRNA. The ribosome then switches to translate the ORF on the tmRNA; the nascent peptide is terminated with the 'tag peptide' encoded by the tmRNA and targeted for degradation. The ribosome is freed to recommence translation, which seems to be the essential function of trans-translation.</text>
</comment>
<comment type="subcellular location">
    <subcellularLocation>
        <location evidence="1">Cytoplasm</location>
    </subcellularLocation>
    <text evidence="1">The tmRNA-SmpB complex associates with stalled 70S ribosomes.</text>
</comment>
<comment type="similarity">
    <text evidence="1">Belongs to the SmpB family.</text>
</comment>
<proteinExistence type="inferred from homology"/>
<protein>
    <recommendedName>
        <fullName evidence="1">SsrA-binding protein</fullName>
    </recommendedName>
    <alternativeName>
        <fullName evidence="1">Small protein B</fullName>
    </alternativeName>
</protein>
<gene>
    <name evidence="1" type="primary">smpB</name>
    <name type="ordered locus">NTHI1153</name>
</gene>
<keyword id="KW-0963">Cytoplasm</keyword>
<keyword id="KW-0694">RNA-binding</keyword>
<name>SSRP_HAEI8</name>
<accession>Q4QLS9</accession>
<evidence type="ECO:0000255" key="1">
    <source>
        <dbReference type="HAMAP-Rule" id="MF_00023"/>
    </source>
</evidence>
<reference key="1">
    <citation type="journal article" date="2005" name="J. Bacteriol.">
        <title>Genomic sequence of an otitis media isolate of nontypeable Haemophilus influenzae: comparative study with H. influenzae serotype d, strain KW20.</title>
        <authorList>
            <person name="Harrison A."/>
            <person name="Dyer D.W."/>
            <person name="Gillaspy A."/>
            <person name="Ray W.C."/>
            <person name="Mungur R."/>
            <person name="Carson M.B."/>
            <person name="Zhong H."/>
            <person name="Gipson J."/>
            <person name="Gipson M."/>
            <person name="Johnson L.S."/>
            <person name="Lewis L."/>
            <person name="Bakaletz L.O."/>
            <person name="Munson R.S. Jr."/>
        </authorList>
    </citation>
    <scope>NUCLEOTIDE SEQUENCE [LARGE SCALE GENOMIC DNA]</scope>
    <source>
        <strain>86-028NP</strain>
    </source>
</reference>
<feature type="chain" id="PRO_0000102958" description="SsrA-binding protein">
    <location>
        <begin position="1"/>
        <end position="161"/>
    </location>
</feature>
<dbReference type="EMBL" id="CP000057">
    <property type="protein sequence ID" value="AAX88018.1"/>
    <property type="molecule type" value="Genomic_DNA"/>
</dbReference>
<dbReference type="RefSeq" id="WP_005647965.1">
    <property type="nucleotide sequence ID" value="NC_007146.2"/>
</dbReference>
<dbReference type="SMR" id="Q4QLS9"/>
<dbReference type="KEGG" id="hit:NTHI1153"/>
<dbReference type="HOGENOM" id="CLU_108953_3_0_6"/>
<dbReference type="Proteomes" id="UP000002525">
    <property type="component" value="Chromosome"/>
</dbReference>
<dbReference type="GO" id="GO:0005829">
    <property type="term" value="C:cytosol"/>
    <property type="evidence" value="ECO:0007669"/>
    <property type="project" value="TreeGrafter"/>
</dbReference>
<dbReference type="GO" id="GO:0003723">
    <property type="term" value="F:RNA binding"/>
    <property type="evidence" value="ECO:0007669"/>
    <property type="project" value="UniProtKB-UniRule"/>
</dbReference>
<dbReference type="GO" id="GO:0070929">
    <property type="term" value="P:trans-translation"/>
    <property type="evidence" value="ECO:0007669"/>
    <property type="project" value="UniProtKB-UniRule"/>
</dbReference>
<dbReference type="CDD" id="cd09294">
    <property type="entry name" value="SmpB"/>
    <property type="match status" value="1"/>
</dbReference>
<dbReference type="Gene3D" id="2.40.280.10">
    <property type="match status" value="1"/>
</dbReference>
<dbReference type="HAMAP" id="MF_00023">
    <property type="entry name" value="SmpB"/>
    <property type="match status" value="1"/>
</dbReference>
<dbReference type="InterPro" id="IPR023620">
    <property type="entry name" value="SmpB"/>
</dbReference>
<dbReference type="InterPro" id="IPR000037">
    <property type="entry name" value="SsrA-bd_prot"/>
</dbReference>
<dbReference type="InterPro" id="IPR020081">
    <property type="entry name" value="SsrA-bd_prot_CS"/>
</dbReference>
<dbReference type="NCBIfam" id="NF003843">
    <property type="entry name" value="PRK05422.1"/>
    <property type="match status" value="1"/>
</dbReference>
<dbReference type="NCBIfam" id="TIGR00086">
    <property type="entry name" value="smpB"/>
    <property type="match status" value="1"/>
</dbReference>
<dbReference type="PANTHER" id="PTHR30308:SF2">
    <property type="entry name" value="SSRA-BINDING PROTEIN"/>
    <property type="match status" value="1"/>
</dbReference>
<dbReference type="PANTHER" id="PTHR30308">
    <property type="entry name" value="TMRNA-BINDING COMPONENT OF TRANS-TRANSLATION TAGGING COMPLEX"/>
    <property type="match status" value="1"/>
</dbReference>
<dbReference type="Pfam" id="PF01668">
    <property type="entry name" value="SmpB"/>
    <property type="match status" value="1"/>
</dbReference>
<dbReference type="SUPFAM" id="SSF74982">
    <property type="entry name" value="Small protein B (SmpB)"/>
    <property type="match status" value="1"/>
</dbReference>
<dbReference type="PROSITE" id="PS01317">
    <property type="entry name" value="SSRP"/>
    <property type="match status" value="1"/>
</dbReference>
<sequence>MTKKKVKPNSNTIALNKRARHDYFIEDEIEAGLELQGWEVKSMRAGKANISDSYVIFKNGEAFLFGASIQPLNVASTHIVCDPTRTRKLLLNKRELASLFGKANRDGFTIVALSLYWKSAWAKVKIGLAKGKKQQDKRDDIKEREWKVTKDRIMKNAHRRS</sequence>